<protein>
    <recommendedName>
        <fullName evidence="1">Alanine--tRNA ligase</fullName>
        <ecNumber evidence="1">6.1.1.7</ecNumber>
    </recommendedName>
    <alternativeName>
        <fullName evidence="1">Alanyl-tRNA synthetase</fullName>
        <shortName evidence="1">AlaRS</shortName>
    </alternativeName>
</protein>
<comment type="function">
    <text evidence="1">Catalyzes the attachment of alanine to tRNA(Ala) in a two-step reaction: alanine is first activated by ATP to form Ala-AMP and then transferred to the acceptor end of tRNA(Ala). Also edits incorrectly charged Ser-tRNA(Ala) and Gly-tRNA(Ala) via its editing domain.</text>
</comment>
<comment type="catalytic activity">
    <reaction evidence="1">
        <text>tRNA(Ala) + L-alanine + ATP = L-alanyl-tRNA(Ala) + AMP + diphosphate</text>
        <dbReference type="Rhea" id="RHEA:12540"/>
        <dbReference type="Rhea" id="RHEA-COMP:9657"/>
        <dbReference type="Rhea" id="RHEA-COMP:9923"/>
        <dbReference type="ChEBI" id="CHEBI:30616"/>
        <dbReference type="ChEBI" id="CHEBI:33019"/>
        <dbReference type="ChEBI" id="CHEBI:57972"/>
        <dbReference type="ChEBI" id="CHEBI:78442"/>
        <dbReference type="ChEBI" id="CHEBI:78497"/>
        <dbReference type="ChEBI" id="CHEBI:456215"/>
        <dbReference type="EC" id="6.1.1.7"/>
    </reaction>
</comment>
<comment type="cofactor">
    <cofactor evidence="1">
        <name>Zn(2+)</name>
        <dbReference type="ChEBI" id="CHEBI:29105"/>
    </cofactor>
    <text evidence="1">Binds 1 zinc ion per subunit.</text>
</comment>
<comment type="subcellular location">
    <subcellularLocation>
        <location evidence="1">Cytoplasm</location>
    </subcellularLocation>
</comment>
<comment type="domain">
    <text evidence="1">Consists of three domains; the N-terminal catalytic domain, the editing domain and the C-terminal C-Ala domain. The editing domain removes incorrectly charged amino acids, while the C-Ala domain, along with tRNA(Ala), serves as a bridge to cooperatively bring together the editing and aminoacylation centers thus stimulating deacylation of misacylated tRNAs.</text>
</comment>
<comment type="similarity">
    <text evidence="1">Belongs to the class-II aminoacyl-tRNA synthetase family.</text>
</comment>
<sequence length="872" mass="96525">MKQLSSAQVRQMWLDFWATKGHSVEPSVSLVPVNDPTLLWINSGVATLKKYFDGTIIPENPRITNAQKAIRTNDIENVGKTARHHTMFEMLGNFSIGDYFRDEAITWAYELLTSPEWFDFPAEKLYMTYYPDDKDSYNRWIEVGVDPSHLIPIEDNFWEIGAGPSGPDTEIFFDRGEAFDPENIGLRLLAEDIENDRYIEIWNIVLSQFNADPAVPRSEYKELPHKNIDTGAGLERLVAVIQGAKTNFETDLFMPIIREVEKLSGKVYDQDGDNMSFKVIADHIRSLSFAIGDGALPGNEGRGYVLRRLLRRASMHGQKLGINEPFLYKLVPTVGKIMESYYPEVLEKRDFIEKIVKSEEESFARTLHSGQHFAQGIVADLKEKGQSVIAGQDVFKLYDTYGFPVELTEEIAEEAGMTVDREGFEAAMKEQQERARASAVKGGSMGMQNETLQNITVESVFNYNTSQLSSKLVAIVADNAEVGAVSEGTASLIFAETSFYAEMGGQVADYGQILDESGKIVATVTNVQKAPNGQALHTVEVLAPLALNQEYTLAIDSNRRHRVMKNHTATHLLHAALHNILGNHATQAGSLNEVEFLRFDFTHFQAVTAEELRAIEQQVNEKIWEALEVKTVETDIDTAKEMGAMALFGEKYGKEVRVVTIGDYSIELCGGTHVDNTSEIGLFKIVKEEGIGSGTRRILAVTGKEAFEAYREQEDALKAIAATLKAPQVKEVPHKVEGLQEQLRQLQKENAELKEKAAAAAAGDIFKDVKEVNGHRYIASQVSVSDAGALRTFADNWKQKDYSDLLVLVAAIGDKVNVLVASKTKDLHAGNLVKELAPIIDGRGGGKPDMAMAGGSNQPKIQELLDAVAGKL</sequence>
<reference key="1">
    <citation type="journal article" date="2001" name="J. Bacteriol.">
        <title>Genome of the bacterium Streptococcus pneumoniae strain R6.</title>
        <authorList>
            <person name="Hoskins J."/>
            <person name="Alborn W.E. Jr."/>
            <person name="Arnold J."/>
            <person name="Blaszczak L.C."/>
            <person name="Burgett S."/>
            <person name="DeHoff B.S."/>
            <person name="Estrem S.T."/>
            <person name="Fritz L."/>
            <person name="Fu D.-J."/>
            <person name="Fuller W."/>
            <person name="Geringer C."/>
            <person name="Gilmour R."/>
            <person name="Glass J.S."/>
            <person name="Khoja H."/>
            <person name="Kraft A.R."/>
            <person name="Lagace R.E."/>
            <person name="LeBlanc D.J."/>
            <person name="Lee L.N."/>
            <person name="Lefkowitz E.J."/>
            <person name="Lu J."/>
            <person name="Matsushima P."/>
            <person name="McAhren S.M."/>
            <person name="McHenney M."/>
            <person name="McLeaster K."/>
            <person name="Mundy C.W."/>
            <person name="Nicas T.I."/>
            <person name="Norris F.H."/>
            <person name="O'Gara M."/>
            <person name="Peery R.B."/>
            <person name="Robertson G.T."/>
            <person name="Rockey P."/>
            <person name="Sun P.-M."/>
            <person name="Winkler M.E."/>
            <person name="Yang Y."/>
            <person name="Young-Bellido M."/>
            <person name="Zhao G."/>
            <person name="Zook C.A."/>
            <person name="Baltz R.H."/>
            <person name="Jaskunas S.R."/>
            <person name="Rosteck P.R. Jr."/>
            <person name="Skatrud P.L."/>
            <person name="Glass J.I."/>
        </authorList>
    </citation>
    <scope>NUCLEOTIDE SEQUENCE [LARGE SCALE GENOMIC DNA]</scope>
    <source>
        <strain>ATCC BAA-255 / R6</strain>
    </source>
</reference>
<accession>Q8DPC7</accession>
<dbReference type="EC" id="6.1.1.7" evidence="1"/>
<dbReference type="EMBL" id="AE007317">
    <property type="protein sequence ID" value="AAL00044.1"/>
    <property type="molecule type" value="Genomic_DNA"/>
</dbReference>
<dbReference type="PIR" id="G98026">
    <property type="entry name" value="G98026"/>
</dbReference>
<dbReference type="RefSeq" id="NP_358833.1">
    <property type="nucleotide sequence ID" value="NC_003098.1"/>
</dbReference>
<dbReference type="RefSeq" id="WP_000811755.1">
    <property type="nucleotide sequence ID" value="NC_003098.1"/>
</dbReference>
<dbReference type="SMR" id="Q8DPC7"/>
<dbReference type="STRING" id="171101.spr1240"/>
<dbReference type="KEGG" id="spr:spr1240"/>
<dbReference type="PATRIC" id="fig|171101.6.peg.1346"/>
<dbReference type="eggNOG" id="COG0013">
    <property type="taxonomic scope" value="Bacteria"/>
</dbReference>
<dbReference type="HOGENOM" id="CLU_004485_1_1_9"/>
<dbReference type="Proteomes" id="UP000000586">
    <property type="component" value="Chromosome"/>
</dbReference>
<dbReference type="GO" id="GO:0005829">
    <property type="term" value="C:cytosol"/>
    <property type="evidence" value="ECO:0000318"/>
    <property type="project" value="GO_Central"/>
</dbReference>
<dbReference type="GO" id="GO:0004813">
    <property type="term" value="F:alanine-tRNA ligase activity"/>
    <property type="evidence" value="ECO:0000318"/>
    <property type="project" value="GO_Central"/>
</dbReference>
<dbReference type="GO" id="GO:0002161">
    <property type="term" value="F:aminoacyl-tRNA deacylase activity"/>
    <property type="evidence" value="ECO:0000318"/>
    <property type="project" value="GO_Central"/>
</dbReference>
<dbReference type="GO" id="GO:0005524">
    <property type="term" value="F:ATP binding"/>
    <property type="evidence" value="ECO:0007669"/>
    <property type="project" value="UniProtKB-UniRule"/>
</dbReference>
<dbReference type="GO" id="GO:0140096">
    <property type="term" value="F:catalytic activity, acting on a protein"/>
    <property type="evidence" value="ECO:0007669"/>
    <property type="project" value="UniProtKB-ARBA"/>
</dbReference>
<dbReference type="GO" id="GO:0016740">
    <property type="term" value="F:transferase activity"/>
    <property type="evidence" value="ECO:0007669"/>
    <property type="project" value="UniProtKB-ARBA"/>
</dbReference>
<dbReference type="GO" id="GO:0000049">
    <property type="term" value="F:tRNA binding"/>
    <property type="evidence" value="ECO:0007669"/>
    <property type="project" value="UniProtKB-KW"/>
</dbReference>
<dbReference type="GO" id="GO:0008270">
    <property type="term" value="F:zinc ion binding"/>
    <property type="evidence" value="ECO:0007669"/>
    <property type="project" value="UniProtKB-UniRule"/>
</dbReference>
<dbReference type="GO" id="GO:0006419">
    <property type="term" value="P:alanyl-tRNA aminoacylation"/>
    <property type="evidence" value="ECO:0000318"/>
    <property type="project" value="GO_Central"/>
</dbReference>
<dbReference type="CDD" id="cd00673">
    <property type="entry name" value="AlaRS_core"/>
    <property type="match status" value="1"/>
</dbReference>
<dbReference type="FunFam" id="3.10.310.40:FF:000001">
    <property type="entry name" value="Alanine--tRNA ligase"/>
    <property type="match status" value="1"/>
</dbReference>
<dbReference type="FunFam" id="3.30.54.20:FF:000001">
    <property type="entry name" value="Alanine--tRNA ligase"/>
    <property type="match status" value="1"/>
</dbReference>
<dbReference type="FunFam" id="3.30.930.10:FF:000046">
    <property type="entry name" value="Alanine--tRNA ligase"/>
    <property type="match status" value="1"/>
</dbReference>
<dbReference type="FunFam" id="3.30.980.10:FF:000004">
    <property type="entry name" value="Alanine--tRNA ligase, cytoplasmic"/>
    <property type="match status" value="1"/>
</dbReference>
<dbReference type="Gene3D" id="2.40.30.130">
    <property type="match status" value="1"/>
</dbReference>
<dbReference type="Gene3D" id="3.10.310.40">
    <property type="match status" value="1"/>
</dbReference>
<dbReference type="Gene3D" id="3.30.54.20">
    <property type="match status" value="1"/>
</dbReference>
<dbReference type="Gene3D" id="6.10.250.550">
    <property type="match status" value="1"/>
</dbReference>
<dbReference type="Gene3D" id="3.30.930.10">
    <property type="entry name" value="Bira Bifunctional Protein, Domain 2"/>
    <property type="match status" value="1"/>
</dbReference>
<dbReference type="Gene3D" id="3.30.980.10">
    <property type="entry name" value="Threonyl-trna Synthetase, Chain A, domain 2"/>
    <property type="match status" value="1"/>
</dbReference>
<dbReference type="HAMAP" id="MF_00036_B">
    <property type="entry name" value="Ala_tRNA_synth_B"/>
    <property type="match status" value="1"/>
</dbReference>
<dbReference type="InterPro" id="IPR045864">
    <property type="entry name" value="aa-tRNA-synth_II/BPL/LPL"/>
</dbReference>
<dbReference type="InterPro" id="IPR002318">
    <property type="entry name" value="Ala-tRNA-lgiase_IIc"/>
</dbReference>
<dbReference type="InterPro" id="IPR018162">
    <property type="entry name" value="Ala-tRNA-ligase_IIc_anticod-bd"/>
</dbReference>
<dbReference type="InterPro" id="IPR018165">
    <property type="entry name" value="Ala-tRNA-synth_IIc_core"/>
</dbReference>
<dbReference type="InterPro" id="IPR018164">
    <property type="entry name" value="Ala-tRNA-synth_IIc_N"/>
</dbReference>
<dbReference type="InterPro" id="IPR050058">
    <property type="entry name" value="Ala-tRNA_ligase"/>
</dbReference>
<dbReference type="InterPro" id="IPR023033">
    <property type="entry name" value="Ala_tRNA_ligase_euk/bac"/>
</dbReference>
<dbReference type="InterPro" id="IPR003156">
    <property type="entry name" value="DHHA1_dom"/>
</dbReference>
<dbReference type="InterPro" id="IPR018163">
    <property type="entry name" value="Thr/Ala-tRNA-synth_IIc_edit"/>
</dbReference>
<dbReference type="InterPro" id="IPR009000">
    <property type="entry name" value="Transl_B-barrel_sf"/>
</dbReference>
<dbReference type="InterPro" id="IPR012947">
    <property type="entry name" value="tRNA_SAD"/>
</dbReference>
<dbReference type="NCBIfam" id="TIGR00344">
    <property type="entry name" value="alaS"/>
    <property type="match status" value="1"/>
</dbReference>
<dbReference type="PANTHER" id="PTHR11777:SF9">
    <property type="entry name" value="ALANINE--TRNA LIGASE, CYTOPLASMIC"/>
    <property type="match status" value="1"/>
</dbReference>
<dbReference type="PANTHER" id="PTHR11777">
    <property type="entry name" value="ALANYL-TRNA SYNTHETASE"/>
    <property type="match status" value="1"/>
</dbReference>
<dbReference type="Pfam" id="PF02272">
    <property type="entry name" value="DHHA1"/>
    <property type="match status" value="1"/>
</dbReference>
<dbReference type="Pfam" id="PF01411">
    <property type="entry name" value="tRNA-synt_2c"/>
    <property type="match status" value="1"/>
</dbReference>
<dbReference type="Pfam" id="PF07973">
    <property type="entry name" value="tRNA_SAD"/>
    <property type="match status" value="1"/>
</dbReference>
<dbReference type="PRINTS" id="PR00980">
    <property type="entry name" value="TRNASYNTHALA"/>
</dbReference>
<dbReference type="SMART" id="SM00863">
    <property type="entry name" value="tRNA_SAD"/>
    <property type="match status" value="1"/>
</dbReference>
<dbReference type="SUPFAM" id="SSF55681">
    <property type="entry name" value="Class II aaRS and biotin synthetases"/>
    <property type="match status" value="1"/>
</dbReference>
<dbReference type="SUPFAM" id="SSF101353">
    <property type="entry name" value="Putative anticodon-binding domain of alanyl-tRNA synthetase (AlaRS)"/>
    <property type="match status" value="1"/>
</dbReference>
<dbReference type="SUPFAM" id="SSF55186">
    <property type="entry name" value="ThrRS/AlaRS common domain"/>
    <property type="match status" value="1"/>
</dbReference>
<dbReference type="SUPFAM" id="SSF50447">
    <property type="entry name" value="Translation proteins"/>
    <property type="match status" value="1"/>
</dbReference>
<dbReference type="PROSITE" id="PS50860">
    <property type="entry name" value="AA_TRNA_LIGASE_II_ALA"/>
    <property type="match status" value="1"/>
</dbReference>
<name>SYA_STRR6</name>
<organism>
    <name type="scientific">Streptococcus pneumoniae (strain ATCC BAA-255 / R6)</name>
    <dbReference type="NCBI Taxonomy" id="171101"/>
    <lineage>
        <taxon>Bacteria</taxon>
        <taxon>Bacillati</taxon>
        <taxon>Bacillota</taxon>
        <taxon>Bacilli</taxon>
        <taxon>Lactobacillales</taxon>
        <taxon>Streptococcaceae</taxon>
        <taxon>Streptococcus</taxon>
    </lineage>
</organism>
<proteinExistence type="inferred from homology"/>
<keyword id="KW-0030">Aminoacyl-tRNA synthetase</keyword>
<keyword id="KW-0067">ATP-binding</keyword>
<keyword id="KW-0963">Cytoplasm</keyword>
<keyword id="KW-0436">Ligase</keyword>
<keyword id="KW-0479">Metal-binding</keyword>
<keyword id="KW-0547">Nucleotide-binding</keyword>
<keyword id="KW-0648">Protein biosynthesis</keyword>
<keyword id="KW-1185">Reference proteome</keyword>
<keyword id="KW-0694">RNA-binding</keyword>
<keyword id="KW-0820">tRNA-binding</keyword>
<keyword id="KW-0862">Zinc</keyword>
<evidence type="ECO:0000255" key="1">
    <source>
        <dbReference type="HAMAP-Rule" id="MF_00036"/>
    </source>
</evidence>
<feature type="chain" id="PRO_0000075215" description="Alanine--tRNA ligase">
    <location>
        <begin position="1"/>
        <end position="872"/>
    </location>
</feature>
<feature type="binding site" evidence="1">
    <location>
        <position position="567"/>
    </location>
    <ligand>
        <name>Zn(2+)</name>
        <dbReference type="ChEBI" id="CHEBI:29105"/>
    </ligand>
</feature>
<feature type="binding site" evidence="1">
    <location>
        <position position="571"/>
    </location>
    <ligand>
        <name>Zn(2+)</name>
        <dbReference type="ChEBI" id="CHEBI:29105"/>
    </ligand>
</feature>
<feature type="binding site" evidence="1">
    <location>
        <position position="669"/>
    </location>
    <ligand>
        <name>Zn(2+)</name>
        <dbReference type="ChEBI" id="CHEBI:29105"/>
    </ligand>
</feature>
<feature type="binding site" evidence="1">
    <location>
        <position position="673"/>
    </location>
    <ligand>
        <name>Zn(2+)</name>
        <dbReference type="ChEBI" id="CHEBI:29105"/>
    </ligand>
</feature>
<gene>
    <name evidence="1" type="primary">alaS</name>
    <name type="ordered locus">spr1240</name>
</gene>